<keyword id="KW-0002">3D-structure</keyword>
<keyword id="KW-0025">Alternative splicing</keyword>
<keyword id="KW-0106">Calcium</keyword>
<keyword id="KW-1003">Cell membrane</keyword>
<keyword id="KW-0165">Cleavage on pair of basic residues</keyword>
<keyword id="KW-0177">Collagen degradation</keyword>
<keyword id="KW-1015">Disulfide bond</keyword>
<keyword id="KW-0272">Extracellular matrix</keyword>
<keyword id="KW-0325">Glycoprotein</keyword>
<keyword id="KW-0378">Hydrolase</keyword>
<keyword id="KW-0472">Membrane</keyword>
<keyword id="KW-0479">Metal-binding</keyword>
<keyword id="KW-0482">Metalloprotease</keyword>
<keyword id="KW-0645">Protease</keyword>
<keyword id="KW-1267">Proteomics identification</keyword>
<keyword id="KW-1185">Reference proteome</keyword>
<keyword id="KW-0677">Repeat</keyword>
<keyword id="KW-0964">Secreted</keyword>
<keyword id="KW-0732">Signal</keyword>
<keyword id="KW-0812">Transmembrane</keyword>
<keyword id="KW-1133">Transmembrane helix</keyword>
<keyword id="KW-0862">Zinc</keyword>
<keyword id="KW-0865">Zymogen</keyword>
<dbReference type="EC" id="3.4.24.-"/>
<dbReference type="EMBL" id="AB009303">
    <property type="protein sequence ID" value="BAA23742.1"/>
    <property type="molecule type" value="mRNA"/>
</dbReference>
<dbReference type="EMBL" id="D83646">
    <property type="protein sequence ID" value="BAA12022.1"/>
    <property type="molecule type" value="mRNA"/>
</dbReference>
<dbReference type="EMBL" id="D83647">
    <property type="protein sequence ID" value="BAA12023.1"/>
    <property type="molecule type" value="mRNA"/>
</dbReference>
<dbReference type="EMBL" id="D85511">
    <property type="protein sequence ID" value="BAA22226.1"/>
    <property type="molecule type" value="mRNA"/>
</dbReference>
<dbReference type="EMBL" id="DQ003082">
    <property type="protein sequence ID" value="AAX84515.1"/>
    <property type="molecule type" value="Genomic_DNA"/>
</dbReference>
<dbReference type="EMBL" id="AK314274">
    <property type="protein sequence ID" value="BAG36934.1"/>
    <property type="molecule type" value="mRNA"/>
</dbReference>
<dbReference type="EMBL" id="CH471060">
    <property type="protein sequence ID" value="EAW91651.1"/>
    <property type="molecule type" value="Genomic_DNA"/>
</dbReference>
<dbReference type="EMBL" id="BC069500">
    <property type="protein sequence ID" value="AAH69500.1"/>
    <property type="molecule type" value="mRNA"/>
</dbReference>
<dbReference type="EMBL" id="BC075004">
    <property type="protein sequence ID" value="AAH75004.1"/>
    <property type="molecule type" value="mRNA"/>
</dbReference>
<dbReference type="EMBL" id="BC075005">
    <property type="protein sequence ID" value="AAH75005.1"/>
    <property type="molecule type" value="mRNA"/>
</dbReference>
<dbReference type="CCDS" id="CCDS6246.1">
    <molecule id="P51512-1"/>
</dbReference>
<dbReference type="RefSeq" id="NP_005932.2">
    <molecule id="P51512-1"/>
    <property type="nucleotide sequence ID" value="NM_005941.4"/>
</dbReference>
<dbReference type="PDB" id="1RM8">
    <property type="method" value="X-ray"/>
    <property type="resolution" value="1.80 A"/>
    <property type="chains" value="A=124-292"/>
</dbReference>
<dbReference type="PDBsum" id="1RM8"/>
<dbReference type="SMR" id="P51512"/>
<dbReference type="BioGRID" id="110468">
    <property type="interactions" value="14"/>
</dbReference>
<dbReference type="FunCoup" id="P51512">
    <property type="interactions" value="1137"/>
</dbReference>
<dbReference type="IntAct" id="P51512">
    <property type="interactions" value="1"/>
</dbReference>
<dbReference type="MINT" id="P51512"/>
<dbReference type="STRING" id="9606.ENSP00000286614"/>
<dbReference type="BindingDB" id="P51512"/>
<dbReference type="ChEMBL" id="CHEMBL2200"/>
<dbReference type="DrugBank" id="DB03880">
    <property type="generic name" value="Batimastat"/>
</dbReference>
<dbReference type="DrugBank" id="DB00786">
    <property type="generic name" value="Marimastat"/>
</dbReference>
<dbReference type="GuidetoPHARMACOLOGY" id="1640"/>
<dbReference type="MEROPS" id="M10.016"/>
<dbReference type="GlyCosmos" id="P51512">
    <property type="glycosylation" value="1 site, No reported glycans"/>
</dbReference>
<dbReference type="GlyGen" id="P51512">
    <property type="glycosylation" value="1 site"/>
</dbReference>
<dbReference type="iPTMnet" id="P51512"/>
<dbReference type="PhosphoSitePlus" id="P51512"/>
<dbReference type="SwissPalm" id="P51512"/>
<dbReference type="BioMuta" id="MMP16"/>
<dbReference type="DMDM" id="3041669"/>
<dbReference type="jPOST" id="P51512"/>
<dbReference type="MassIVE" id="P51512"/>
<dbReference type="PaxDb" id="9606-ENSP00000286614"/>
<dbReference type="PeptideAtlas" id="P51512"/>
<dbReference type="ProteomicsDB" id="56313">
    <molecule id="P51512-1"/>
</dbReference>
<dbReference type="ProteomicsDB" id="56314">
    <molecule id="P51512-2"/>
</dbReference>
<dbReference type="Antibodypedia" id="12678">
    <property type="antibodies" value="417 antibodies from 38 providers"/>
</dbReference>
<dbReference type="DNASU" id="4325"/>
<dbReference type="Ensembl" id="ENST00000286614.11">
    <molecule id="P51512-1"/>
    <property type="protein sequence ID" value="ENSP00000286614.6"/>
    <property type="gene ID" value="ENSG00000156103.16"/>
</dbReference>
<dbReference type="GeneID" id="4325"/>
<dbReference type="KEGG" id="hsa:4325"/>
<dbReference type="MANE-Select" id="ENST00000286614.11">
    <property type="protein sequence ID" value="ENSP00000286614.6"/>
    <property type="RefSeq nucleotide sequence ID" value="NM_005941.5"/>
    <property type="RefSeq protein sequence ID" value="NP_005932.2"/>
</dbReference>
<dbReference type="UCSC" id="uc003yeb.5">
    <molecule id="P51512-1"/>
    <property type="organism name" value="human"/>
</dbReference>
<dbReference type="AGR" id="HGNC:7162"/>
<dbReference type="CTD" id="4325"/>
<dbReference type="DisGeNET" id="4325"/>
<dbReference type="GeneCards" id="MMP16"/>
<dbReference type="HGNC" id="HGNC:7162">
    <property type="gene designation" value="MMP16"/>
</dbReference>
<dbReference type="HPA" id="ENSG00000156103">
    <property type="expression patterns" value="Tissue enhanced (brain)"/>
</dbReference>
<dbReference type="MIM" id="602262">
    <property type="type" value="gene"/>
</dbReference>
<dbReference type="neXtProt" id="NX_P51512"/>
<dbReference type="OpenTargets" id="ENSG00000156103"/>
<dbReference type="PharmGKB" id="PA30874"/>
<dbReference type="VEuPathDB" id="HostDB:ENSG00000156103"/>
<dbReference type="eggNOG" id="KOG1565">
    <property type="taxonomic scope" value="Eukaryota"/>
</dbReference>
<dbReference type="GeneTree" id="ENSGT00940000157532"/>
<dbReference type="HOGENOM" id="CLU_015489_8_1_1"/>
<dbReference type="InParanoid" id="P51512"/>
<dbReference type="OMA" id="RKNDRPR"/>
<dbReference type="OrthoDB" id="406838at2759"/>
<dbReference type="PAN-GO" id="P51512">
    <property type="GO annotations" value="5 GO annotations based on evolutionary models"/>
</dbReference>
<dbReference type="PhylomeDB" id="P51512"/>
<dbReference type="TreeFam" id="TF352396"/>
<dbReference type="PathwayCommons" id="P51512"/>
<dbReference type="Reactome" id="R-HSA-1592389">
    <property type="pathway name" value="Activation of Matrix Metalloproteinases"/>
</dbReference>
<dbReference type="Reactome" id="R-HSA-9839383">
    <property type="pathway name" value="TGFBR3 PTM regulation"/>
</dbReference>
<dbReference type="SignaLink" id="P51512"/>
<dbReference type="SIGNOR" id="P51512"/>
<dbReference type="BioGRID-ORCS" id="4325">
    <property type="hits" value="14 hits in 1161 CRISPR screens"/>
</dbReference>
<dbReference type="ChiTaRS" id="MMP16">
    <property type="organism name" value="human"/>
</dbReference>
<dbReference type="EvolutionaryTrace" id="P51512"/>
<dbReference type="GeneWiki" id="MMP16"/>
<dbReference type="GenomeRNAi" id="4325"/>
<dbReference type="Pharos" id="P51512">
    <property type="development level" value="Tchem"/>
</dbReference>
<dbReference type="PRO" id="PR:P51512"/>
<dbReference type="Proteomes" id="UP000005640">
    <property type="component" value="Chromosome 8"/>
</dbReference>
<dbReference type="RNAct" id="P51512">
    <property type="molecule type" value="protein"/>
</dbReference>
<dbReference type="Bgee" id="ENSG00000156103">
    <property type="expression patterns" value="Expressed in endothelial cell and 148 other cell types or tissues"/>
</dbReference>
<dbReference type="ExpressionAtlas" id="P51512">
    <property type="expression patterns" value="baseline and differential"/>
</dbReference>
<dbReference type="GO" id="GO:0009986">
    <property type="term" value="C:cell surface"/>
    <property type="evidence" value="ECO:0007669"/>
    <property type="project" value="UniProtKB-SubCell"/>
</dbReference>
<dbReference type="GO" id="GO:0031012">
    <property type="term" value="C:extracellular matrix"/>
    <property type="evidence" value="ECO:0007669"/>
    <property type="project" value="InterPro"/>
</dbReference>
<dbReference type="GO" id="GO:0005615">
    <property type="term" value="C:extracellular space"/>
    <property type="evidence" value="ECO:0000318"/>
    <property type="project" value="GO_Central"/>
</dbReference>
<dbReference type="GO" id="GO:0005796">
    <property type="term" value="C:Golgi lumen"/>
    <property type="evidence" value="ECO:0000304"/>
    <property type="project" value="Reactome"/>
</dbReference>
<dbReference type="GO" id="GO:0005886">
    <property type="term" value="C:plasma membrane"/>
    <property type="evidence" value="ECO:0000314"/>
    <property type="project" value="ParkinsonsUK-UCL"/>
</dbReference>
<dbReference type="GO" id="GO:0008047">
    <property type="term" value="F:enzyme activator activity"/>
    <property type="evidence" value="ECO:0000304"/>
    <property type="project" value="ProtInc"/>
</dbReference>
<dbReference type="GO" id="GO:0070006">
    <property type="term" value="F:metalloaminopeptidase activity"/>
    <property type="evidence" value="ECO:0000314"/>
    <property type="project" value="ParkinsonsUK-UCL"/>
</dbReference>
<dbReference type="GO" id="GO:0004222">
    <property type="term" value="F:metalloendopeptidase activity"/>
    <property type="evidence" value="ECO:0000314"/>
    <property type="project" value="ParkinsonsUK-UCL"/>
</dbReference>
<dbReference type="GO" id="GO:0008270">
    <property type="term" value="F:zinc ion binding"/>
    <property type="evidence" value="ECO:0000314"/>
    <property type="project" value="ParkinsonsUK-UCL"/>
</dbReference>
<dbReference type="GO" id="GO:0035988">
    <property type="term" value="P:chondrocyte proliferation"/>
    <property type="evidence" value="ECO:0007669"/>
    <property type="project" value="Ensembl"/>
</dbReference>
<dbReference type="GO" id="GO:0030574">
    <property type="term" value="P:collagen catabolic process"/>
    <property type="evidence" value="ECO:0000318"/>
    <property type="project" value="GO_Central"/>
</dbReference>
<dbReference type="GO" id="GO:0097094">
    <property type="term" value="P:craniofacial suture morphogenesis"/>
    <property type="evidence" value="ECO:0007669"/>
    <property type="project" value="Ensembl"/>
</dbReference>
<dbReference type="GO" id="GO:0048701">
    <property type="term" value="P:embryonic cranial skeleton morphogenesis"/>
    <property type="evidence" value="ECO:0007669"/>
    <property type="project" value="Ensembl"/>
</dbReference>
<dbReference type="GO" id="GO:0001958">
    <property type="term" value="P:endochondral ossification"/>
    <property type="evidence" value="ECO:0007669"/>
    <property type="project" value="Ensembl"/>
</dbReference>
<dbReference type="GO" id="GO:0030198">
    <property type="term" value="P:extracellular matrix organization"/>
    <property type="evidence" value="ECO:0000318"/>
    <property type="project" value="GO_Central"/>
</dbReference>
<dbReference type="GO" id="GO:0016485">
    <property type="term" value="P:protein processing"/>
    <property type="evidence" value="ECO:0000314"/>
    <property type="project" value="ParkinsonsUK-UCL"/>
</dbReference>
<dbReference type="GO" id="GO:0006508">
    <property type="term" value="P:proteolysis"/>
    <property type="evidence" value="ECO:0000314"/>
    <property type="project" value="ParkinsonsUK-UCL"/>
</dbReference>
<dbReference type="GO" id="GO:0001501">
    <property type="term" value="P:skeletal system development"/>
    <property type="evidence" value="ECO:0000318"/>
    <property type="project" value="GO_Central"/>
</dbReference>
<dbReference type="CDD" id="cd00094">
    <property type="entry name" value="HX"/>
    <property type="match status" value="1"/>
</dbReference>
<dbReference type="CDD" id="cd04278">
    <property type="entry name" value="ZnMc_MMP"/>
    <property type="match status" value="1"/>
</dbReference>
<dbReference type="FunFam" id="3.40.390.10:FF:000005">
    <property type="entry name" value="Matrix metallopeptidase 16"/>
    <property type="match status" value="1"/>
</dbReference>
<dbReference type="FunFam" id="2.110.10.10:FF:000001">
    <property type="entry name" value="Matrix metallopeptidase 24"/>
    <property type="match status" value="1"/>
</dbReference>
<dbReference type="Gene3D" id="3.40.390.10">
    <property type="entry name" value="Collagenase (Catalytic Domain)"/>
    <property type="match status" value="1"/>
</dbReference>
<dbReference type="Gene3D" id="2.110.10.10">
    <property type="entry name" value="Hemopexin-like domain"/>
    <property type="match status" value="1"/>
</dbReference>
<dbReference type="InterPro" id="IPR000585">
    <property type="entry name" value="Hemopexin-like_dom"/>
</dbReference>
<dbReference type="InterPro" id="IPR036375">
    <property type="entry name" value="Hemopexin-like_dom_sf"/>
</dbReference>
<dbReference type="InterPro" id="IPR018487">
    <property type="entry name" value="Hemopexin-like_repeat"/>
</dbReference>
<dbReference type="InterPro" id="IPR018486">
    <property type="entry name" value="Hemopexin_CS"/>
</dbReference>
<dbReference type="InterPro" id="IPR033739">
    <property type="entry name" value="M10A_MMP"/>
</dbReference>
<dbReference type="InterPro" id="IPR024079">
    <property type="entry name" value="MetalloPept_cat_dom_sf"/>
</dbReference>
<dbReference type="InterPro" id="IPR001818">
    <property type="entry name" value="Pept_M10_metallopeptidase"/>
</dbReference>
<dbReference type="InterPro" id="IPR021190">
    <property type="entry name" value="Pept_M10A"/>
</dbReference>
<dbReference type="InterPro" id="IPR021805">
    <property type="entry name" value="Pept_M10A_metallopeptidase_C"/>
</dbReference>
<dbReference type="InterPro" id="IPR021158">
    <property type="entry name" value="Pept_M10A_Zn_BS"/>
</dbReference>
<dbReference type="InterPro" id="IPR006026">
    <property type="entry name" value="Peptidase_Metallo"/>
</dbReference>
<dbReference type="InterPro" id="IPR002477">
    <property type="entry name" value="Peptidoglycan-bd-like"/>
</dbReference>
<dbReference type="InterPro" id="IPR036365">
    <property type="entry name" value="PGBD-like_sf"/>
</dbReference>
<dbReference type="PANTHER" id="PTHR10201">
    <property type="entry name" value="MATRIX METALLOPROTEINASE"/>
    <property type="match status" value="1"/>
</dbReference>
<dbReference type="PANTHER" id="PTHR10201:SF26">
    <property type="entry name" value="MATRIX METALLOPROTEINASE-16"/>
    <property type="match status" value="1"/>
</dbReference>
<dbReference type="Pfam" id="PF11857">
    <property type="entry name" value="DUF3377"/>
    <property type="match status" value="1"/>
</dbReference>
<dbReference type="Pfam" id="PF00045">
    <property type="entry name" value="Hemopexin"/>
    <property type="match status" value="4"/>
</dbReference>
<dbReference type="Pfam" id="PF00413">
    <property type="entry name" value="Peptidase_M10"/>
    <property type="match status" value="1"/>
</dbReference>
<dbReference type="Pfam" id="PF01471">
    <property type="entry name" value="PG_binding_1"/>
    <property type="match status" value="1"/>
</dbReference>
<dbReference type="PIRSF" id="PIRSF001191">
    <property type="entry name" value="Peptidase_M10A_matrix"/>
    <property type="match status" value="1"/>
</dbReference>
<dbReference type="PRINTS" id="PR00138">
    <property type="entry name" value="MATRIXIN"/>
</dbReference>
<dbReference type="SMART" id="SM00120">
    <property type="entry name" value="HX"/>
    <property type="match status" value="4"/>
</dbReference>
<dbReference type="SMART" id="SM00235">
    <property type="entry name" value="ZnMc"/>
    <property type="match status" value="1"/>
</dbReference>
<dbReference type="SUPFAM" id="SSF50923">
    <property type="entry name" value="Hemopexin-like domain"/>
    <property type="match status" value="1"/>
</dbReference>
<dbReference type="SUPFAM" id="SSF55486">
    <property type="entry name" value="Metalloproteases ('zincins'), catalytic domain"/>
    <property type="match status" value="1"/>
</dbReference>
<dbReference type="SUPFAM" id="SSF47090">
    <property type="entry name" value="PGBD-like"/>
    <property type="match status" value="1"/>
</dbReference>
<dbReference type="PROSITE" id="PS00546">
    <property type="entry name" value="CYSTEINE_SWITCH"/>
    <property type="match status" value="1"/>
</dbReference>
<dbReference type="PROSITE" id="PS00024">
    <property type="entry name" value="HEMOPEXIN"/>
    <property type="match status" value="1"/>
</dbReference>
<dbReference type="PROSITE" id="PS51642">
    <property type="entry name" value="HEMOPEXIN_2"/>
    <property type="match status" value="4"/>
</dbReference>
<dbReference type="PROSITE" id="PS00142">
    <property type="entry name" value="ZINC_PROTEASE"/>
    <property type="match status" value="1"/>
</dbReference>
<evidence type="ECO:0000250" key="1"/>
<evidence type="ECO:0000255" key="2"/>
<evidence type="ECO:0000256" key="3">
    <source>
        <dbReference type="SAM" id="MobiDB-lite"/>
    </source>
</evidence>
<evidence type="ECO:0000269" key="4">
    <source>
    </source>
</evidence>
<evidence type="ECO:0000269" key="5">
    <source>
    </source>
</evidence>
<evidence type="ECO:0000303" key="6">
    <source>
    </source>
</evidence>
<evidence type="ECO:0000305" key="7"/>
<evidence type="ECO:0000312" key="8">
    <source>
        <dbReference type="HGNC" id="HGNC:7162"/>
    </source>
</evidence>
<evidence type="ECO:0007744" key="9">
    <source>
        <dbReference type="PDB" id="1RM8"/>
    </source>
</evidence>
<evidence type="ECO:0007829" key="10">
    <source>
        <dbReference type="PDB" id="1RM8"/>
    </source>
</evidence>
<organism>
    <name type="scientific">Homo sapiens</name>
    <name type="common">Human</name>
    <dbReference type="NCBI Taxonomy" id="9606"/>
    <lineage>
        <taxon>Eukaryota</taxon>
        <taxon>Metazoa</taxon>
        <taxon>Chordata</taxon>
        <taxon>Craniata</taxon>
        <taxon>Vertebrata</taxon>
        <taxon>Euteleostomi</taxon>
        <taxon>Mammalia</taxon>
        <taxon>Eutheria</taxon>
        <taxon>Euarchontoglires</taxon>
        <taxon>Primates</taxon>
        <taxon>Haplorrhini</taxon>
        <taxon>Catarrhini</taxon>
        <taxon>Hominidae</taxon>
        <taxon>Homo</taxon>
    </lineage>
</organism>
<protein>
    <recommendedName>
        <fullName>Matrix metalloproteinase-16</fullName>
        <shortName>MMP-16</shortName>
        <ecNumber>3.4.24.-</ecNumber>
    </recommendedName>
    <alternativeName>
        <fullName>MMP-X2</fullName>
    </alternativeName>
    <alternativeName>
        <fullName>Membrane-type matrix metalloproteinase 3</fullName>
        <shortName>MT-MMP 3</shortName>
        <shortName>MTMMP3</shortName>
    </alternativeName>
    <alternativeName>
        <fullName>Membrane-type-3 matrix metalloproteinase</fullName>
        <shortName>MT3-MMP</shortName>
        <shortName>MT3MMP</shortName>
    </alternativeName>
</protein>
<sequence>MILLTFSTGRRLDFVHHSGVFFLQTLLWILCATVCGTEQYFNVEVWLQKYGYLPPTDPRMSVLRSAETMQSALAAMQQFYGINMTGKVDRNTIDWMKKPRCGVPDQTRGSSKFHIRRKRYALTGQKWQHKHITYSIKNVTPKVGDPETRKAIRRAFDVWQNVTPLTFEEVPYSELENGKRDVDITIIFASGFHGDSSPFDGEGGFLAHAYFPGPGIGGDTHFDSDEPWTLGNPNHDGNDLFLVAVHELGHALGLEHSNDPTAIMAPFYQYMETDNFKLPNDDLQGIQKIYGPPDKIPPPTRPLPTVPPHRSIPPADPRKNDRPKPPRPPTGRPSYPGAKPNICDGNFNTLAILRREMFVFKDQWFWRVRNNRVMDGYPMQITYFWRGLPPSIDAVYENSDGNFVFFKGNKYWVFKDTTLQPGYPHDLITLGSGIPPHGIDSAIWWEDVGKTYFFKGDRYWRYSEEMKTMDPGYPKPITVWKGIPESPQGAFVHKENGFTYFYKGKEYWKFNNQILKVEPGYPRSILKDFMGCDGPTDRVKEGHSPPDDVDIVIKLDNTASTVKAIAIVIPCILALCLLVLVYTVFQFKRKGTPRHILYCKRSMQEWV</sequence>
<accession>P51512</accession>
<accession>B2RAN7</accession>
<accession>Q14824</accession>
<accession>Q52H48</accession>
<comment type="function">
    <text evidence="4">Endopeptidase that degrades various components of the extracellular matrix, such as collagen type III and fibronectin. Activates progelatinase A. Involved in the matrix remodeling of blood vessels. Isoform short cleaves fibronectin and also collagen type III, but at lower rate. It has no effect on type I, II, IV and V collagen. However, upon interaction with CSPG4, it may be involved in degradation and invasion of type I collagen by melanoma cells.</text>
</comment>
<comment type="cofactor">
    <cofactor evidence="1">
        <name>Zn(2+)</name>
        <dbReference type="ChEBI" id="CHEBI:29105"/>
    </cofactor>
    <text evidence="1">Binds 2 zinc ions per subunit.</text>
</comment>
<comment type="cofactor">
    <cofactor evidence="1">
        <name>Ca(2+)</name>
        <dbReference type="ChEBI" id="CHEBI:29108"/>
    </cofactor>
</comment>
<comment type="activity regulation">
    <text>TIMP-2 shows little inhibitory activity compared to TIMP-1. TIMP-1 seems to have less binding affinity than TIMP-2 for the short isoform.</text>
</comment>
<comment type="subunit">
    <text evidence="4 5">Interacts with CSPG4 through CSPG4 chondroitin sulfate glycosaminoglycan.</text>
</comment>
<comment type="subcellular location">
    <molecule>Isoform Long</molecule>
    <subcellularLocation>
        <location evidence="7">Cell membrane</location>
        <topology evidence="7">Single-pass type I membrane protein</topology>
        <orientation evidence="7">Extracellular side</orientation>
    </subcellularLocation>
    <text>Localized at the cell surface of melanoma cells.</text>
</comment>
<comment type="subcellular location">
    <molecule>Isoform Short</molecule>
    <subcellularLocation>
        <location>Secreted</location>
        <location>Extracellular space</location>
        <location>Extracellular matrix</location>
    </subcellularLocation>
    <subcellularLocation>
        <location>Cell surface</location>
    </subcellularLocation>
    <text>Localized at the cell surface of melanoma cells.</text>
</comment>
<comment type="alternative products">
    <event type="alternative splicing"/>
    <isoform>
        <id>P51512-1</id>
        <name>Long</name>
        <sequence type="displayed"/>
    </isoform>
    <isoform>
        <id>P51512-2</id>
        <name>Short</name>
        <name>SM3</name>
        <sequence type="described" ref="VSP_005453 VSP_005454"/>
    </isoform>
</comment>
<comment type="tissue specificity">
    <text>Expressed in heart, brain, placenta, ovary and small intestine. Isoform Short is found in the ovary.</text>
</comment>
<comment type="developmental stage">
    <text>Expressed in tissues undergoing reconstruction. Present in fetal tissues, especially in brain. Expression seems to decline with advanced development.</text>
</comment>
<comment type="domain">
    <text>The conserved cysteine present in the cysteine-switch motif binds the catalytic zinc ion, thus inhibiting the enzyme. The dissociation of the cysteine from the zinc ion upon the activation-peptide release activates the enzyme.</text>
</comment>
<comment type="PTM">
    <text evidence="1">The precursor is cleaved by a furin endopeptidase.</text>
</comment>
<comment type="similarity">
    <text evidence="7">Belongs to the peptidase M10A family.</text>
</comment>
<reference key="1">
    <citation type="journal article" date="1995" name="J. Biol. Chem.">
        <title>Identification of the second membrane-type matrix metalloproteinase (MT-MMP-2) gene from a human placenta cDNA library. MT-MMPs form a unique membrane-type subclass in the MMP family.</title>
        <authorList>
            <person name="Takino T."/>
            <person name="Sato H."/>
            <person name="Shinagawa A."/>
            <person name="Seiki M."/>
        </authorList>
    </citation>
    <scope>NUCLEOTIDE SEQUENCE [MRNA] (ISOFORM LONG)</scope>
    <source>
        <tissue>Placenta</tissue>
    </source>
</reference>
<reference key="2">
    <citation type="submission" date="1997-12" db="EMBL/GenBank/DDBJ databases">
        <authorList>
            <person name="Seiki M."/>
        </authorList>
    </citation>
    <scope>SEQUENCE REVISION</scope>
</reference>
<reference key="3">
    <citation type="journal article" date="1997" name="Biochim. Biophys. Acta">
        <title>Identification of soluble type of membrane-type matrix metalloproteinase-3 formed by alternatively spliced mRNA.</title>
        <authorList>
            <person name="Matsumoto S."/>
            <person name="Katoh M."/>
            <person name="Saito S."/>
            <person name="Watanabe T."/>
            <person name="Masuho Y."/>
        </authorList>
    </citation>
    <scope>NUCLEOTIDE SEQUENCE [MRNA] (ISOFORMS LONG AND SHORT)</scope>
    <source>
        <tissue>Ovary</tissue>
    </source>
</reference>
<reference key="4">
    <citation type="journal article" date="1997" name="J. Biol. Chem.">
        <title>Expression of three membrane-type matrix metalloproteinases (MT-MMPs) in rat vascular smooth muscle cells and characterization of MT3-MMPs with and without transmembrane domain.</title>
        <authorList>
            <person name="Shofuda K."/>
            <person name="Yasumitsu H."/>
            <person name="Nishihashi A."/>
            <person name="Miki K."/>
            <person name="Miyazaki K."/>
        </authorList>
    </citation>
    <scope>NUCLEOTIDE SEQUENCE [MRNA] (ISOFORM LONG)</scope>
    <source>
        <tissue>Fetal brain</tissue>
    </source>
</reference>
<reference key="5">
    <citation type="submission" date="2005-04" db="EMBL/GenBank/DDBJ databases">
        <authorList>
            <consortium name="NIEHS SNPs program"/>
        </authorList>
    </citation>
    <scope>NUCLEOTIDE SEQUENCE [GENOMIC DNA]</scope>
</reference>
<reference key="6">
    <citation type="journal article" date="2004" name="Nat. Genet.">
        <title>Complete sequencing and characterization of 21,243 full-length human cDNAs.</title>
        <authorList>
            <person name="Ota T."/>
            <person name="Suzuki Y."/>
            <person name="Nishikawa T."/>
            <person name="Otsuki T."/>
            <person name="Sugiyama T."/>
            <person name="Irie R."/>
            <person name="Wakamatsu A."/>
            <person name="Hayashi K."/>
            <person name="Sato H."/>
            <person name="Nagai K."/>
            <person name="Kimura K."/>
            <person name="Makita H."/>
            <person name="Sekine M."/>
            <person name="Obayashi M."/>
            <person name="Nishi T."/>
            <person name="Shibahara T."/>
            <person name="Tanaka T."/>
            <person name="Ishii S."/>
            <person name="Yamamoto J."/>
            <person name="Saito K."/>
            <person name="Kawai Y."/>
            <person name="Isono Y."/>
            <person name="Nakamura Y."/>
            <person name="Nagahari K."/>
            <person name="Murakami K."/>
            <person name="Yasuda T."/>
            <person name="Iwayanagi T."/>
            <person name="Wagatsuma M."/>
            <person name="Shiratori A."/>
            <person name="Sudo H."/>
            <person name="Hosoiri T."/>
            <person name="Kaku Y."/>
            <person name="Kodaira H."/>
            <person name="Kondo H."/>
            <person name="Sugawara M."/>
            <person name="Takahashi M."/>
            <person name="Kanda K."/>
            <person name="Yokoi T."/>
            <person name="Furuya T."/>
            <person name="Kikkawa E."/>
            <person name="Omura Y."/>
            <person name="Abe K."/>
            <person name="Kamihara K."/>
            <person name="Katsuta N."/>
            <person name="Sato K."/>
            <person name="Tanikawa M."/>
            <person name="Yamazaki M."/>
            <person name="Ninomiya K."/>
            <person name="Ishibashi T."/>
            <person name="Yamashita H."/>
            <person name="Murakawa K."/>
            <person name="Fujimori K."/>
            <person name="Tanai H."/>
            <person name="Kimata M."/>
            <person name="Watanabe M."/>
            <person name="Hiraoka S."/>
            <person name="Chiba Y."/>
            <person name="Ishida S."/>
            <person name="Ono Y."/>
            <person name="Takiguchi S."/>
            <person name="Watanabe S."/>
            <person name="Yosida M."/>
            <person name="Hotuta T."/>
            <person name="Kusano J."/>
            <person name="Kanehori K."/>
            <person name="Takahashi-Fujii A."/>
            <person name="Hara H."/>
            <person name="Tanase T.-O."/>
            <person name="Nomura Y."/>
            <person name="Togiya S."/>
            <person name="Komai F."/>
            <person name="Hara R."/>
            <person name="Takeuchi K."/>
            <person name="Arita M."/>
            <person name="Imose N."/>
            <person name="Musashino K."/>
            <person name="Yuuki H."/>
            <person name="Oshima A."/>
            <person name="Sasaki N."/>
            <person name="Aotsuka S."/>
            <person name="Yoshikawa Y."/>
            <person name="Matsunawa H."/>
            <person name="Ichihara T."/>
            <person name="Shiohata N."/>
            <person name="Sano S."/>
            <person name="Moriya S."/>
            <person name="Momiyama H."/>
            <person name="Satoh N."/>
            <person name="Takami S."/>
            <person name="Terashima Y."/>
            <person name="Suzuki O."/>
            <person name="Nakagawa S."/>
            <person name="Senoh A."/>
            <person name="Mizoguchi H."/>
            <person name="Goto Y."/>
            <person name="Shimizu F."/>
            <person name="Wakebe H."/>
            <person name="Hishigaki H."/>
            <person name="Watanabe T."/>
            <person name="Sugiyama A."/>
            <person name="Takemoto M."/>
            <person name="Kawakami B."/>
            <person name="Yamazaki M."/>
            <person name="Watanabe K."/>
            <person name="Kumagai A."/>
            <person name="Itakura S."/>
            <person name="Fukuzumi Y."/>
            <person name="Fujimori Y."/>
            <person name="Komiyama M."/>
            <person name="Tashiro H."/>
            <person name="Tanigami A."/>
            <person name="Fujiwara T."/>
            <person name="Ono T."/>
            <person name="Yamada K."/>
            <person name="Fujii Y."/>
            <person name="Ozaki K."/>
            <person name="Hirao M."/>
            <person name="Ohmori Y."/>
            <person name="Kawabata A."/>
            <person name="Hikiji T."/>
            <person name="Kobatake N."/>
            <person name="Inagaki H."/>
            <person name="Ikema Y."/>
            <person name="Okamoto S."/>
            <person name="Okitani R."/>
            <person name="Kawakami T."/>
            <person name="Noguchi S."/>
            <person name="Itoh T."/>
            <person name="Shigeta K."/>
            <person name="Senba T."/>
            <person name="Matsumura K."/>
            <person name="Nakajima Y."/>
            <person name="Mizuno T."/>
            <person name="Morinaga M."/>
            <person name="Sasaki M."/>
            <person name="Togashi T."/>
            <person name="Oyama M."/>
            <person name="Hata H."/>
            <person name="Watanabe M."/>
            <person name="Komatsu T."/>
            <person name="Mizushima-Sugano J."/>
            <person name="Satoh T."/>
            <person name="Shirai Y."/>
            <person name="Takahashi Y."/>
            <person name="Nakagawa K."/>
            <person name="Okumura K."/>
            <person name="Nagase T."/>
            <person name="Nomura N."/>
            <person name="Kikuchi H."/>
            <person name="Masuho Y."/>
            <person name="Yamashita R."/>
            <person name="Nakai K."/>
            <person name="Yada T."/>
            <person name="Nakamura Y."/>
            <person name="Ohara O."/>
            <person name="Isogai T."/>
            <person name="Sugano S."/>
        </authorList>
    </citation>
    <scope>NUCLEOTIDE SEQUENCE [LARGE SCALE MRNA] (ISOFORM LONG)</scope>
</reference>
<reference key="7">
    <citation type="submission" date="2005-07" db="EMBL/GenBank/DDBJ databases">
        <authorList>
            <person name="Mural R.J."/>
            <person name="Istrail S."/>
            <person name="Sutton G.G."/>
            <person name="Florea L."/>
            <person name="Halpern A.L."/>
            <person name="Mobarry C.M."/>
            <person name="Lippert R."/>
            <person name="Walenz B."/>
            <person name="Shatkay H."/>
            <person name="Dew I."/>
            <person name="Miller J.R."/>
            <person name="Flanigan M.J."/>
            <person name="Edwards N.J."/>
            <person name="Bolanos R."/>
            <person name="Fasulo D."/>
            <person name="Halldorsson B.V."/>
            <person name="Hannenhalli S."/>
            <person name="Turner R."/>
            <person name="Yooseph S."/>
            <person name="Lu F."/>
            <person name="Nusskern D.R."/>
            <person name="Shue B.C."/>
            <person name="Zheng X.H."/>
            <person name="Zhong F."/>
            <person name="Delcher A.L."/>
            <person name="Huson D.H."/>
            <person name="Kravitz S.A."/>
            <person name="Mouchard L."/>
            <person name="Reinert K."/>
            <person name="Remington K.A."/>
            <person name="Clark A.G."/>
            <person name="Waterman M.S."/>
            <person name="Eichler E.E."/>
            <person name="Adams M.D."/>
            <person name="Hunkapiller M.W."/>
            <person name="Myers E.W."/>
            <person name="Venter J.C."/>
        </authorList>
    </citation>
    <scope>NUCLEOTIDE SEQUENCE [LARGE SCALE GENOMIC DNA]</scope>
</reference>
<reference key="8">
    <citation type="journal article" date="2004" name="Genome Res.">
        <title>The status, quality, and expansion of the NIH full-length cDNA project: the Mammalian Gene Collection (MGC).</title>
        <authorList>
            <consortium name="The MGC Project Team"/>
        </authorList>
    </citation>
    <scope>NUCLEOTIDE SEQUENCE [LARGE SCALE MRNA] (ISOFORM LONG)</scope>
    <source>
        <tissue>Brain</tissue>
    </source>
</reference>
<reference key="9">
    <citation type="journal article" date="2001" name="J. Biol. Chem.">
        <title>Melanoma chondroitin sulfate proteoglycan regulates matrix metalloproteinase-dependent human melanoma invasion into type I collagen.</title>
        <authorList>
            <person name="Iida J."/>
            <person name="Pei D."/>
            <person name="Kang T."/>
            <person name="Simpson M.A."/>
            <person name="Herlyn M."/>
            <person name="Furcht L.T."/>
            <person name="McCarthy J.B."/>
        </authorList>
    </citation>
    <scope>INTERACTION WITH CSPG4</scope>
    <scope>SUBCELLULAR LOCATION</scope>
    <scope>FUNCTION</scope>
</reference>
<reference evidence="9" key="10">
    <citation type="journal article" date="2004" name="J. Mol. Biol.">
        <title>Crystal structure of the catalytic domain of MMP-16/MT3-MMP: characterization of MT-MMP specific features.</title>
        <authorList>
            <person name="Lang R."/>
            <person name="Braun M."/>
            <person name="Sounni N.E."/>
            <person name="Noel A."/>
            <person name="Frankenne F."/>
            <person name="Foidart J.M."/>
            <person name="Bode W."/>
            <person name="Maskos K."/>
        </authorList>
    </citation>
    <scope>X-RAY CRYSTALLOGRAPHY (1.8 ANGSTROMS) OF 124-292 IN COMPLEX WITH INHIBITOR; CALCIUM AND ZINC</scope>
    <scope>ZINC-BINDING SITES</scope>
    <scope>CALCIUM-BINDING SITES</scope>
</reference>
<gene>
    <name evidence="8" type="primary">MMP16</name>
    <name evidence="8" type="synonym">C8orf57</name>
    <name type="synonym">MMPX2</name>
</gene>
<proteinExistence type="evidence at protein level"/>
<name>MMP16_HUMAN</name>
<feature type="signal peptide" evidence="2">
    <location>
        <begin position="1"/>
        <end position="31"/>
    </location>
</feature>
<feature type="propeptide" id="PRO_0000028812" evidence="1">
    <location>
        <begin position="32"/>
        <end position="119"/>
    </location>
</feature>
<feature type="chain" id="PRO_0000028813" description="Matrix metalloproteinase-16">
    <location>
        <begin position="120"/>
        <end position="607"/>
    </location>
</feature>
<feature type="topological domain" description="Extracellular" evidence="2">
    <location>
        <begin position="120"/>
        <end position="564"/>
    </location>
</feature>
<feature type="transmembrane region" description="Helical" evidence="2">
    <location>
        <begin position="565"/>
        <end position="585"/>
    </location>
</feature>
<feature type="topological domain" description="Cytoplasmic" evidence="2">
    <location>
        <begin position="586"/>
        <end position="607"/>
    </location>
</feature>
<feature type="repeat" description="Hemopexin 1">
    <location>
        <begin position="340"/>
        <end position="388"/>
    </location>
</feature>
<feature type="repeat" description="Hemopexin 2">
    <location>
        <begin position="389"/>
        <end position="434"/>
    </location>
</feature>
<feature type="repeat" description="Hemopexin 3">
    <location>
        <begin position="436"/>
        <end position="484"/>
    </location>
</feature>
<feature type="repeat" description="Hemopexin 4">
    <location>
        <begin position="485"/>
        <end position="532"/>
    </location>
</feature>
<feature type="region of interest" description="Disordered" evidence="3">
    <location>
        <begin position="281"/>
        <end position="340"/>
    </location>
</feature>
<feature type="short sequence motif" description="Cysteine switch" evidence="1">
    <location>
        <begin position="99"/>
        <end position="106"/>
    </location>
</feature>
<feature type="compositionally biased region" description="Pro residues" evidence="3">
    <location>
        <begin position="294"/>
        <end position="315"/>
    </location>
</feature>
<feature type="active site">
    <location>
        <position position="247"/>
    </location>
</feature>
<feature type="binding site" description="in inhibited form" evidence="1">
    <location>
        <position position="101"/>
    </location>
    <ligand>
        <name>Zn(2+)</name>
        <dbReference type="ChEBI" id="CHEBI:29105"/>
        <label>2</label>
        <note>catalytic</note>
    </ligand>
</feature>
<feature type="binding site" evidence="9">
    <location>
        <position position="183"/>
    </location>
    <ligand>
        <name>Ca(2+)</name>
        <dbReference type="ChEBI" id="CHEBI:29108"/>
        <label>1</label>
    </ligand>
</feature>
<feature type="binding site" evidence="9">
    <location>
        <position position="193"/>
    </location>
    <ligand>
        <name>Zn(2+)</name>
        <dbReference type="ChEBI" id="CHEBI:29105"/>
        <label>1</label>
        <note>structural</note>
    </ligand>
</feature>
<feature type="binding site" evidence="9">
    <location>
        <position position="195"/>
    </location>
    <ligand>
        <name>Zn(2+)</name>
        <dbReference type="ChEBI" id="CHEBI:29105"/>
        <label>1</label>
        <note>structural</note>
    </ligand>
</feature>
<feature type="binding site" evidence="9">
    <location>
        <position position="200"/>
    </location>
    <ligand>
        <name>Ca(2+)</name>
        <dbReference type="ChEBI" id="CHEBI:29108"/>
        <label>2</label>
    </ligand>
</feature>
<feature type="binding site" evidence="9">
    <location>
        <position position="201"/>
    </location>
    <ligand>
        <name>Ca(2+)</name>
        <dbReference type="ChEBI" id="CHEBI:29108"/>
        <label>2</label>
    </ligand>
</feature>
<feature type="binding site" evidence="9">
    <location>
        <position position="203"/>
    </location>
    <ligand>
        <name>Ca(2+)</name>
        <dbReference type="ChEBI" id="CHEBI:29108"/>
        <label>2</label>
    </ligand>
</feature>
<feature type="binding site" evidence="9">
    <location>
        <position position="205"/>
    </location>
    <ligand>
        <name>Ca(2+)</name>
        <dbReference type="ChEBI" id="CHEBI:29108"/>
        <label>2</label>
    </ligand>
</feature>
<feature type="binding site" evidence="9">
    <location>
        <position position="208"/>
    </location>
    <ligand>
        <name>Zn(2+)</name>
        <dbReference type="ChEBI" id="CHEBI:29105"/>
        <label>1</label>
        <note>structural</note>
    </ligand>
</feature>
<feature type="binding site" evidence="9">
    <location>
        <position position="215"/>
    </location>
    <ligand>
        <name>Ca(2+)</name>
        <dbReference type="ChEBI" id="CHEBI:29108"/>
        <label>1</label>
    </ligand>
</feature>
<feature type="binding site">
    <location>
        <position position="217"/>
    </location>
    <ligand>
        <name>Ca(2+)</name>
        <dbReference type="ChEBI" id="CHEBI:29108"/>
        <label>1</label>
    </ligand>
</feature>
<feature type="binding site" evidence="9">
    <location>
        <position position="219"/>
    </location>
    <ligand>
        <name>Ca(2+)</name>
        <dbReference type="ChEBI" id="CHEBI:29108"/>
        <label>1</label>
    </ligand>
</feature>
<feature type="binding site" evidence="9">
    <location>
        <position position="221"/>
    </location>
    <ligand>
        <name>Zn(2+)</name>
        <dbReference type="ChEBI" id="CHEBI:29105"/>
        <label>1</label>
        <note>structural</note>
    </ligand>
</feature>
<feature type="binding site" evidence="9">
    <location>
        <position position="223"/>
    </location>
    <ligand>
        <name>Ca(2+)</name>
        <dbReference type="ChEBI" id="CHEBI:29108"/>
        <label>2</label>
    </ligand>
</feature>
<feature type="binding site" evidence="9">
    <location>
        <position position="226"/>
    </location>
    <ligand>
        <name>Ca(2+)</name>
        <dbReference type="ChEBI" id="CHEBI:29108"/>
        <label>2</label>
    </ligand>
</feature>
<feature type="binding site" evidence="9">
    <location>
        <position position="246"/>
    </location>
    <ligand>
        <name>Zn(2+)</name>
        <dbReference type="ChEBI" id="CHEBI:29105"/>
        <label>2</label>
        <note>catalytic</note>
    </ligand>
</feature>
<feature type="binding site" evidence="9">
    <location>
        <position position="250"/>
    </location>
    <ligand>
        <name>Zn(2+)</name>
        <dbReference type="ChEBI" id="CHEBI:29105"/>
        <label>2</label>
        <note>catalytic</note>
    </ligand>
</feature>
<feature type="binding site" evidence="9">
    <location>
        <position position="256"/>
    </location>
    <ligand>
        <name>Zn(2+)</name>
        <dbReference type="ChEBI" id="CHEBI:29105"/>
        <label>2</label>
        <note>catalytic</note>
    </ligand>
</feature>
<feature type="glycosylation site" description="N-linked (GlcNAc...) asparagine" evidence="2">
    <location>
        <position position="83"/>
    </location>
</feature>
<feature type="disulfide bond" evidence="1">
    <location>
        <begin position="343"/>
        <end position="532"/>
    </location>
</feature>
<feature type="splice variant" id="VSP_005453" description="In isoform Short." evidence="6">
    <original>GNKYWVFKDTTLQPGYPHDLITLGSGIPPHGIDSAIWWEDVGKTYFFKGD</original>
    <variation>VKGDTLSVIQDGWLYKYHWKWILEQRQSVPVLSRQTEKHKTYEELSSITY</variation>
    <location>
        <begin position="408"/>
        <end position="457"/>
    </location>
</feature>
<feature type="splice variant" id="VSP_005454" description="In isoform Short." evidence="6">
    <location>
        <begin position="458"/>
        <end position="607"/>
    </location>
</feature>
<feature type="sequence conflict" description="In Ref. 1; BAA23742." evidence="7" ref="1">
    <original>Y</original>
    <variation>H</variation>
    <location>
        <position position="521"/>
    </location>
</feature>
<feature type="strand" evidence="10">
    <location>
        <begin position="128"/>
        <end position="136"/>
    </location>
</feature>
<feature type="turn" evidence="10">
    <location>
        <begin position="141"/>
        <end position="143"/>
    </location>
</feature>
<feature type="helix" evidence="10">
    <location>
        <begin position="145"/>
        <end position="160"/>
    </location>
</feature>
<feature type="strand" evidence="10">
    <location>
        <begin position="166"/>
        <end position="169"/>
    </location>
</feature>
<feature type="strand" evidence="10">
    <location>
        <begin position="177"/>
        <end position="179"/>
    </location>
</feature>
<feature type="strand" evidence="10">
    <location>
        <begin position="183"/>
        <end position="191"/>
    </location>
</feature>
<feature type="strand" evidence="10">
    <location>
        <begin position="194"/>
        <end position="196"/>
    </location>
</feature>
<feature type="strand" evidence="10">
    <location>
        <begin position="201"/>
        <end position="204"/>
    </location>
</feature>
<feature type="strand" evidence="10">
    <location>
        <begin position="207"/>
        <end position="209"/>
    </location>
</feature>
<feature type="turn" evidence="10">
    <location>
        <begin position="215"/>
        <end position="218"/>
    </location>
</feature>
<feature type="strand" evidence="10">
    <location>
        <begin position="220"/>
        <end position="223"/>
    </location>
</feature>
<feature type="strand" evidence="10">
    <location>
        <begin position="228"/>
        <end position="231"/>
    </location>
</feature>
<feature type="strand" evidence="10">
    <location>
        <begin position="234"/>
        <end position="239"/>
    </location>
</feature>
<feature type="helix" evidence="10">
    <location>
        <begin position="240"/>
        <end position="251"/>
    </location>
</feature>
<feature type="strand" evidence="10">
    <location>
        <begin position="265"/>
        <end position="267"/>
    </location>
</feature>
<feature type="helix" evidence="10">
    <location>
        <begin position="280"/>
        <end position="290"/>
    </location>
</feature>